<reference key="1">
    <citation type="journal article" date="2001" name="Am. J. Respir. Cell Mol. Biol.">
        <title>BR22, a novel protein, interacts with thyroid transcription factor-1 and activates the human surfactant protein B promoter.</title>
        <authorList>
            <person name="Yang Y.-S."/>
            <person name="Yang M.-C."/>
            <person name="Wang B."/>
            <person name="Weissler J.C."/>
        </authorList>
    </citation>
    <scope>NUCLEOTIDE SEQUENCE [MRNA]</scope>
    <scope>TISSUE SPECIFICITY</scope>
    <scope>INTERACTION WITH NKX2-1</scope>
</reference>
<reference key="2">
    <citation type="journal article" date="2000" name="Genome Res.">
        <title>Cloning and functional analysis of cDNAs with open reading frames for 300 previously undefined genes expressed in CD34+ hematopoietic stem/progenitor cells.</title>
        <authorList>
            <person name="Zhang Q.-H."/>
            <person name="Ye M."/>
            <person name="Wu X.-Y."/>
            <person name="Ren S.-X."/>
            <person name="Zhao M."/>
            <person name="Zhao C.-J."/>
            <person name="Fu G."/>
            <person name="Shen Y."/>
            <person name="Fan H.-Y."/>
            <person name="Lu G."/>
            <person name="Zhong M."/>
            <person name="Xu X.-R."/>
            <person name="Han Z.-G."/>
            <person name="Zhang J.-W."/>
            <person name="Tao J."/>
            <person name="Huang Q.-H."/>
            <person name="Zhou J."/>
            <person name="Hu G.-X."/>
            <person name="Gu J."/>
            <person name="Chen S.-J."/>
            <person name="Chen Z."/>
        </authorList>
    </citation>
    <scope>NUCLEOTIDE SEQUENCE [LARGE SCALE MRNA]</scope>
    <source>
        <tissue>Umbilical cord blood</tissue>
    </source>
</reference>
<reference key="3">
    <citation type="journal article" date="2004" name="Genome Res.">
        <title>The status, quality, and expansion of the NIH full-length cDNA project: the Mammalian Gene Collection (MGC).</title>
        <authorList>
            <consortium name="The MGC Project Team"/>
        </authorList>
    </citation>
    <scope>NUCLEOTIDE SEQUENCE [LARGE SCALE MRNA]</scope>
    <source>
        <tissue>Testis</tissue>
    </source>
</reference>
<reference key="4">
    <citation type="journal article" date="2004" name="Nat. Genet.">
        <title>Complete sequencing and characterization of 21,243 full-length human cDNAs.</title>
        <authorList>
            <person name="Ota T."/>
            <person name="Suzuki Y."/>
            <person name="Nishikawa T."/>
            <person name="Otsuki T."/>
            <person name="Sugiyama T."/>
            <person name="Irie R."/>
            <person name="Wakamatsu A."/>
            <person name="Hayashi K."/>
            <person name="Sato H."/>
            <person name="Nagai K."/>
            <person name="Kimura K."/>
            <person name="Makita H."/>
            <person name="Sekine M."/>
            <person name="Obayashi M."/>
            <person name="Nishi T."/>
            <person name="Shibahara T."/>
            <person name="Tanaka T."/>
            <person name="Ishii S."/>
            <person name="Yamamoto J."/>
            <person name="Saito K."/>
            <person name="Kawai Y."/>
            <person name="Isono Y."/>
            <person name="Nakamura Y."/>
            <person name="Nagahari K."/>
            <person name="Murakami K."/>
            <person name="Yasuda T."/>
            <person name="Iwayanagi T."/>
            <person name="Wagatsuma M."/>
            <person name="Shiratori A."/>
            <person name="Sudo H."/>
            <person name="Hosoiri T."/>
            <person name="Kaku Y."/>
            <person name="Kodaira H."/>
            <person name="Kondo H."/>
            <person name="Sugawara M."/>
            <person name="Takahashi M."/>
            <person name="Kanda K."/>
            <person name="Yokoi T."/>
            <person name="Furuya T."/>
            <person name="Kikkawa E."/>
            <person name="Omura Y."/>
            <person name="Abe K."/>
            <person name="Kamihara K."/>
            <person name="Katsuta N."/>
            <person name="Sato K."/>
            <person name="Tanikawa M."/>
            <person name="Yamazaki M."/>
            <person name="Ninomiya K."/>
            <person name="Ishibashi T."/>
            <person name="Yamashita H."/>
            <person name="Murakawa K."/>
            <person name="Fujimori K."/>
            <person name="Tanai H."/>
            <person name="Kimata M."/>
            <person name="Watanabe M."/>
            <person name="Hiraoka S."/>
            <person name="Chiba Y."/>
            <person name="Ishida S."/>
            <person name="Ono Y."/>
            <person name="Takiguchi S."/>
            <person name="Watanabe S."/>
            <person name="Yosida M."/>
            <person name="Hotuta T."/>
            <person name="Kusano J."/>
            <person name="Kanehori K."/>
            <person name="Takahashi-Fujii A."/>
            <person name="Hara H."/>
            <person name="Tanase T.-O."/>
            <person name="Nomura Y."/>
            <person name="Togiya S."/>
            <person name="Komai F."/>
            <person name="Hara R."/>
            <person name="Takeuchi K."/>
            <person name="Arita M."/>
            <person name="Imose N."/>
            <person name="Musashino K."/>
            <person name="Yuuki H."/>
            <person name="Oshima A."/>
            <person name="Sasaki N."/>
            <person name="Aotsuka S."/>
            <person name="Yoshikawa Y."/>
            <person name="Matsunawa H."/>
            <person name="Ichihara T."/>
            <person name="Shiohata N."/>
            <person name="Sano S."/>
            <person name="Moriya S."/>
            <person name="Momiyama H."/>
            <person name="Satoh N."/>
            <person name="Takami S."/>
            <person name="Terashima Y."/>
            <person name="Suzuki O."/>
            <person name="Nakagawa S."/>
            <person name="Senoh A."/>
            <person name="Mizoguchi H."/>
            <person name="Goto Y."/>
            <person name="Shimizu F."/>
            <person name="Wakebe H."/>
            <person name="Hishigaki H."/>
            <person name="Watanabe T."/>
            <person name="Sugiyama A."/>
            <person name="Takemoto M."/>
            <person name="Kawakami B."/>
            <person name="Yamazaki M."/>
            <person name="Watanabe K."/>
            <person name="Kumagai A."/>
            <person name="Itakura S."/>
            <person name="Fukuzumi Y."/>
            <person name="Fujimori Y."/>
            <person name="Komiyama M."/>
            <person name="Tashiro H."/>
            <person name="Tanigami A."/>
            <person name="Fujiwara T."/>
            <person name="Ono T."/>
            <person name="Yamada K."/>
            <person name="Fujii Y."/>
            <person name="Ozaki K."/>
            <person name="Hirao M."/>
            <person name="Ohmori Y."/>
            <person name="Kawabata A."/>
            <person name="Hikiji T."/>
            <person name="Kobatake N."/>
            <person name="Inagaki H."/>
            <person name="Ikema Y."/>
            <person name="Okamoto S."/>
            <person name="Okitani R."/>
            <person name="Kawakami T."/>
            <person name="Noguchi S."/>
            <person name="Itoh T."/>
            <person name="Shigeta K."/>
            <person name="Senba T."/>
            <person name="Matsumura K."/>
            <person name="Nakajima Y."/>
            <person name="Mizuno T."/>
            <person name="Morinaga M."/>
            <person name="Sasaki M."/>
            <person name="Togashi T."/>
            <person name="Oyama M."/>
            <person name="Hata H."/>
            <person name="Watanabe M."/>
            <person name="Komatsu T."/>
            <person name="Mizushima-Sugano J."/>
            <person name="Satoh T."/>
            <person name="Shirai Y."/>
            <person name="Takahashi Y."/>
            <person name="Nakagawa K."/>
            <person name="Okumura K."/>
            <person name="Nagase T."/>
            <person name="Nomura N."/>
            <person name="Kikuchi H."/>
            <person name="Masuho Y."/>
            <person name="Yamashita R."/>
            <person name="Nakai K."/>
            <person name="Yada T."/>
            <person name="Nakamura Y."/>
            <person name="Ohara O."/>
            <person name="Isogai T."/>
            <person name="Sugano S."/>
        </authorList>
    </citation>
    <scope>NUCLEOTIDE SEQUENCE [LARGE SCALE MRNA] OF 1-160</scope>
</reference>
<reference key="5">
    <citation type="journal article" date="2003" name="Eur. Respir. J.">
        <title>BR22, a 26 kDa thyroid transcription factor-1 associated protein (TAP26), is expressed in human lung cells.</title>
        <authorList>
            <person name="Yang M.-C."/>
            <person name="Wang B."/>
            <person name="Weissler J.C."/>
            <person name="Margraf L.R."/>
            <person name="Yang Y.-S."/>
        </authorList>
    </citation>
    <scope>FUNCTION</scope>
</reference>
<reference key="6">
    <citation type="journal article" date="2006" name="Biochem. Biophys. Res. Commun.">
        <title>The TTF-1/TAP26 complex differentially modulates surfactant protein-B (SFTPB) and -C (SFTPBC) promoters in lung cells.</title>
        <authorList>
            <person name="Yang M.-C."/>
            <person name="Guo Y."/>
            <person name="Liu C.-C."/>
            <person name="Weissler J.C."/>
            <person name="Yang Y.-S."/>
        </authorList>
    </citation>
    <scope>FUNCTION</scope>
</reference>
<organism>
    <name type="scientific">Homo sapiens</name>
    <name type="common">Human</name>
    <dbReference type="NCBI Taxonomy" id="9606"/>
    <lineage>
        <taxon>Eukaryota</taxon>
        <taxon>Metazoa</taxon>
        <taxon>Chordata</taxon>
        <taxon>Craniata</taxon>
        <taxon>Vertebrata</taxon>
        <taxon>Euteleostomi</taxon>
        <taxon>Mammalia</taxon>
        <taxon>Eutheria</taxon>
        <taxon>Euarchontoglires</taxon>
        <taxon>Primates</taxon>
        <taxon>Haplorrhini</taxon>
        <taxon>Catarrhini</taxon>
        <taxon>Hominidae</taxon>
        <taxon>Homo</taxon>
    </lineage>
</organism>
<protein>
    <recommendedName>
        <fullName>Thyroid transcription factor 1-associated protein 26</fullName>
        <shortName>TTF-1-associated protein 26</shortName>
    </recommendedName>
    <alternativeName>
        <fullName>Coiled-coil domain-containing protein 59</fullName>
    </alternativeName>
    <alternativeName>
        <fullName>TTF-1-associated protein BR2</fullName>
    </alternativeName>
</protein>
<dbReference type="EMBL" id="AF213377">
    <property type="protein sequence ID" value="AAG43569.1"/>
    <property type="molecule type" value="mRNA"/>
</dbReference>
<dbReference type="EMBL" id="AF161477">
    <property type="protein sequence ID" value="AAF29092.1"/>
    <property type="molecule type" value="mRNA"/>
</dbReference>
<dbReference type="EMBL" id="BC020647">
    <property type="protein sequence ID" value="AAH20647.1"/>
    <property type="molecule type" value="mRNA"/>
</dbReference>
<dbReference type="EMBL" id="AK001156">
    <property type="protein sequence ID" value="BAA91524.1"/>
    <property type="molecule type" value="mRNA"/>
</dbReference>
<dbReference type="CCDS" id="CCDS9023.1"/>
<dbReference type="RefSeq" id="NP_054886.2">
    <property type="nucleotide sequence ID" value="NM_014167.5"/>
</dbReference>
<dbReference type="SMR" id="Q9P031"/>
<dbReference type="BioGRID" id="118850">
    <property type="interactions" value="134"/>
</dbReference>
<dbReference type="FunCoup" id="Q9P031">
    <property type="interactions" value="2003"/>
</dbReference>
<dbReference type="IntAct" id="Q9P031">
    <property type="interactions" value="77"/>
</dbReference>
<dbReference type="MINT" id="Q9P031"/>
<dbReference type="STRING" id="9606.ENSP00000256151"/>
<dbReference type="iPTMnet" id="Q9P031"/>
<dbReference type="PhosphoSitePlus" id="Q9P031"/>
<dbReference type="BioMuta" id="CCDC59"/>
<dbReference type="DMDM" id="156633647"/>
<dbReference type="jPOST" id="Q9P031"/>
<dbReference type="MassIVE" id="Q9P031"/>
<dbReference type="PaxDb" id="9606-ENSP00000256151"/>
<dbReference type="PeptideAtlas" id="Q9P031"/>
<dbReference type="ProteomicsDB" id="83538"/>
<dbReference type="Pumba" id="Q9P031"/>
<dbReference type="Antibodypedia" id="29834">
    <property type="antibodies" value="66 antibodies from 17 providers"/>
</dbReference>
<dbReference type="DNASU" id="29080"/>
<dbReference type="Ensembl" id="ENST00000256151.8">
    <property type="protein sequence ID" value="ENSP00000256151.7"/>
    <property type="gene ID" value="ENSG00000133773.12"/>
</dbReference>
<dbReference type="GeneID" id="29080"/>
<dbReference type="KEGG" id="hsa:29080"/>
<dbReference type="MANE-Select" id="ENST00000256151.8">
    <property type="protein sequence ID" value="ENSP00000256151.7"/>
    <property type="RefSeq nucleotide sequence ID" value="NM_014167.5"/>
    <property type="RefSeq protein sequence ID" value="NP_054886.2"/>
</dbReference>
<dbReference type="UCSC" id="uc001szp.5">
    <property type="organism name" value="human"/>
</dbReference>
<dbReference type="AGR" id="HGNC:25005"/>
<dbReference type="CTD" id="29080"/>
<dbReference type="DisGeNET" id="29080"/>
<dbReference type="GeneCards" id="CCDC59"/>
<dbReference type="HGNC" id="HGNC:25005">
    <property type="gene designation" value="CCDC59"/>
</dbReference>
<dbReference type="HPA" id="ENSG00000133773">
    <property type="expression patterns" value="Low tissue specificity"/>
</dbReference>
<dbReference type="MIM" id="619280">
    <property type="type" value="gene"/>
</dbReference>
<dbReference type="neXtProt" id="NX_Q9P031"/>
<dbReference type="OpenTargets" id="ENSG00000133773"/>
<dbReference type="PharmGKB" id="PA143485412"/>
<dbReference type="VEuPathDB" id="HostDB:ENSG00000133773"/>
<dbReference type="eggNOG" id="KOG3777">
    <property type="taxonomic scope" value="Eukaryota"/>
</dbReference>
<dbReference type="eggNOG" id="KOG4819">
    <property type="taxonomic scope" value="Eukaryota"/>
</dbReference>
<dbReference type="GeneTree" id="ENSGT00390000006546"/>
<dbReference type="HOGENOM" id="CLU_101023_0_0_1"/>
<dbReference type="InParanoid" id="Q9P031"/>
<dbReference type="OMA" id="TDRYPDH"/>
<dbReference type="OrthoDB" id="5377144at2759"/>
<dbReference type="PAN-GO" id="Q9P031">
    <property type="GO annotations" value="0 GO annotations based on evolutionary models"/>
</dbReference>
<dbReference type="PhylomeDB" id="Q9P031"/>
<dbReference type="TreeFam" id="TF324429"/>
<dbReference type="PathwayCommons" id="Q9P031"/>
<dbReference type="Reactome" id="R-HSA-5683826">
    <property type="pathway name" value="Surfactant metabolism"/>
</dbReference>
<dbReference type="SignaLink" id="Q9P031"/>
<dbReference type="BioGRID-ORCS" id="29080">
    <property type="hits" value="648 hits in 1121 CRISPR screens"/>
</dbReference>
<dbReference type="CD-CODE" id="91857CE7">
    <property type="entry name" value="Nucleolus"/>
</dbReference>
<dbReference type="ChiTaRS" id="CCDC59">
    <property type="organism name" value="human"/>
</dbReference>
<dbReference type="GenomeRNAi" id="29080"/>
<dbReference type="Pharos" id="Q9P031">
    <property type="development level" value="Tbio"/>
</dbReference>
<dbReference type="PRO" id="PR:Q9P031"/>
<dbReference type="Proteomes" id="UP000005640">
    <property type="component" value="Chromosome 12"/>
</dbReference>
<dbReference type="RNAct" id="Q9P031">
    <property type="molecule type" value="protein"/>
</dbReference>
<dbReference type="Bgee" id="ENSG00000133773">
    <property type="expression patterns" value="Expressed in secondary oocyte and 203 other cell types or tissues"/>
</dbReference>
<dbReference type="ExpressionAtlas" id="Q9P031">
    <property type="expression patterns" value="baseline and differential"/>
</dbReference>
<dbReference type="GO" id="GO:0005654">
    <property type="term" value="C:nucleoplasm"/>
    <property type="evidence" value="ECO:0000304"/>
    <property type="project" value="Reactome"/>
</dbReference>
<dbReference type="GO" id="GO:0003723">
    <property type="term" value="F:RNA binding"/>
    <property type="evidence" value="ECO:0007005"/>
    <property type="project" value="UniProtKB"/>
</dbReference>
<dbReference type="InterPro" id="IPR013730">
    <property type="entry name" value="Fyv7/TAP26"/>
</dbReference>
<dbReference type="PANTHER" id="PTHR15657">
    <property type="entry name" value="THYROID TRANSCRIPTION FACTOR 1-ASSOCIATED PROTEIN 26"/>
    <property type="match status" value="1"/>
</dbReference>
<dbReference type="PANTHER" id="PTHR15657:SF1">
    <property type="entry name" value="THYROID TRANSCRIPTION FACTOR 1-ASSOCIATED PROTEIN 26"/>
    <property type="match status" value="1"/>
</dbReference>
<dbReference type="Pfam" id="PF08524">
    <property type="entry name" value="rRNA_processing"/>
    <property type="match status" value="1"/>
</dbReference>
<dbReference type="PRINTS" id="PR01854">
    <property type="entry name" value="BR22PROTEIN"/>
</dbReference>
<proteinExistence type="evidence at protein level"/>
<evidence type="ECO:0000256" key="1">
    <source>
        <dbReference type="SAM" id="MobiDB-lite"/>
    </source>
</evidence>
<evidence type="ECO:0000269" key="2">
    <source>
    </source>
</evidence>
<evidence type="ECO:0000269" key="3">
    <source>
    </source>
</evidence>
<evidence type="ECO:0000269" key="4">
    <source>
    </source>
</evidence>
<evidence type="ECO:0000305" key="5"/>
<keyword id="KW-0539">Nucleus</keyword>
<keyword id="KW-1267">Proteomics identification</keyword>
<keyword id="KW-1185">Reference proteome</keyword>
<keyword id="KW-0804">Transcription</keyword>
<keyword id="KW-0805">Transcription regulation</keyword>
<sequence>MAPVRRSAKWRPGGIEARGEGVSTVGYRNKNVRQKTWRPNHPQAFVGSVREGQGFAFRRKLKIQQSYKKLLRKEKKAQTSLESQFTDRYPDNLKHLYLAEEERHRKQARKVDHPLSEQVHQPLLEEQCSIDEPLFEDQCSFDQPQPEEQCIKTVNSFTIPKKNKKKTSNQKAQEEYEQIQAKRAAKKQEFERRKQEREEAQRQYKKKKMEVFKILNKKTKKGQPNLNVQMEYLLQKIQEKC</sequence>
<feature type="chain" id="PRO_0000298941" description="Thyroid transcription factor 1-associated protein 26">
    <location>
        <begin position="1"/>
        <end position="241"/>
    </location>
</feature>
<feature type="region of interest" description="Disordered" evidence="1">
    <location>
        <begin position="1"/>
        <end position="22"/>
    </location>
</feature>
<feature type="region of interest" description="Disordered" evidence="1">
    <location>
        <begin position="182"/>
        <end position="205"/>
    </location>
</feature>
<feature type="compositionally biased region" description="Basic and acidic residues" evidence="1">
    <location>
        <begin position="186"/>
        <end position="202"/>
    </location>
</feature>
<feature type="sequence conflict" description="In Ref. 4; BAA91524." evidence="5" ref="4">
    <original>E</original>
    <variation>G</variation>
    <location>
        <position position="136"/>
    </location>
</feature>
<feature type="sequence conflict" description="In Ref. 2; AAF29092." evidence="5" ref="2">
    <original>P</original>
    <variation>S</variation>
    <location>
        <position position="160"/>
    </location>
</feature>
<name>TAP26_HUMAN</name>
<accession>Q9P031</accession>
<accession>Q9H2V5</accession>
<accession>Q9NW62</accession>
<gene>
    <name type="primary">CCDC59</name>
    <name type="synonym">BR22</name>
    <name type="synonym">TAP26</name>
    <name type="ORF">HSPC128</name>
</gene>
<comment type="function">
    <text evidence="3 4">Component of the transcription complexes of the pulmonary surfactant-associated protein-B (SFTPB) and -C (SFTPC). Enhances homeobox protein Nkx-2.1-activated SFTPB and SFTPC promoter activities.</text>
</comment>
<comment type="subunit">
    <text evidence="2">Interacts with NKX2-1.</text>
</comment>
<comment type="interaction">
    <interactant intactId="EBI-1047110">
        <id>Q9P031</id>
    </interactant>
    <interactant intactId="EBI-10182930">
        <id>P43361</id>
        <label>MAGEA8</label>
    </interactant>
    <organismsDiffer>false</organismsDiffer>
    <experiments>3</experiments>
</comment>
<comment type="interaction">
    <interactant intactId="EBI-1047110">
        <id>Q9P031</id>
    </interactant>
    <interactant intactId="EBI-1391923">
        <id>P43699</id>
        <label>NKX2-1</label>
    </interactant>
    <organismsDiffer>false</organismsDiffer>
    <experiments>4</experiments>
</comment>
<comment type="subcellular location">
    <subcellularLocation>
        <location evidence="5">Nucleus</location>
    </subcellularLocation>
</comment>
<comment type="tissue specificity">
    <text evidence="2">Ubiquitously expressed. In lung, expression is restricted to the alveolar epithelial cells.</text>
</comment>
<comment type="similarity">
    <text evidence="5">Belongs to the TAP26 family.</text>
</comment>